<dbReference type="EMBL" id="M28222">
    <property type="protein sequence ID" value="AAA34910.1"/>
    <property type="molecule type" value="Genomic_DNA"/>
</dbReference>
<dbReference type="EMBL" id="X82408">
    <property type="protein sequence ID" value="CAA57804.1"/>
    <property type="molecule type" value="Genomic_DNA"/>
</dbReference>
<dbReference type="EMBL" id="Z72978">
    <property type="protein sequence ID" value="CAA97219.1"/>
    <property type="molecule type" value="Genomic_DNA"/>
</dbReference>
<dbReference type="EMBL" id="AY692983">
    <property type="protein sequence ID" value="AAT93002.1"/>
    <property type="molecule type" value="Genomic_DNA"/>
</dbReference>
<dbReference type="EMBL" id="BK006941">
    <property type="protein sequence ID" value="DAA08286.1"/>
    <property type="molecule type" value="Genomic_DNA"/>
</dbReference>
<dbReference type="PIR" id="A36183">
    <property type="entry name" value="DEBYPX"/>
</dbReference>
<dbReference type="RefSeq" id="NP_011709.1">
    <property type="nucleotide sequence ID" value="NM_001181322.1"/>
</dbReference>
<dbReference type="SMR" id="P16451"/>
<dbReference type="BioGRID" id="33446">
    <property type="interactions" value="100"/>
</dbReference>
<dbReference type="ComplexPortal" id="CPX-3207">
    <property type="entry name" value="Mitochondrial pyruvate dehydrogenase complex"/>
</dbReference>
<dbReference type="DIP" id="DIP-5550N"/>
<dbReference type="FunCoup" id="P16451">
    <property type="interactions" value="153"/>
</dbReference>
<dbReference type="IntAct" id="P16451">
    <property type="interactions" value="20"/>
</dbReference>
<dbReference type="MINT" id="P16451"/>
<dbReference type="STRING" id="4932.YGR193C"/>
<dbReference type="iPTMnet" id="P16451"/>
<dbReference type="SwissPalm" id="P16451"/>
<dbReference type="PaxDb" id="4932-YGR193C"/>
<dbReference type="PeptideAtlas" id="P16451"/>
<dbReference type="EnsemblFungi" id="YGR193C_mRNA">
    <property type="protein sequence ID" value="YGR193C"/>
    <property type="gene ID" value="YGR193C"/>
</dbReference>
<dbReference type="GeneID" id="853107"/>
<dbReference type="KEGG" id="sce:YGR193C"/>
<dbReference type="AGR" id="SGD:S000003425"/>
<dbReference type="SGD" id="S000003425">
    <property type="gene designation" value="PDX1"/>
</dbReference>
<dbReference type="VEuPathDB" id="FungiDB:YGR193C"/>
<dbReference type="eggNOG" id="KOG0557">
    <property type="taxonomic scope" value="Eukaryota"/>
</dbReference>
<dbReference type="HOGENOM" id="CLU_035825_2_1_1"/>
<dbReference type="InParanoid" id="P16451"/>
<dbReference type="OMA" id="NRFEVYD"/>
<dbReference type="OrthoDB" id="202158at2759"/>
<dbReference type="BioCyc" id="YEAST:YGR193C-MONOMER"/>
<dbReference type="BioGRID-ORCS" id="853107">
    <property type="hits" value="1 hit in 10 CRISPR screens"/>
</dbReference>
<dbReference type="PRO" id="PR:P16451"/>
<dbReference type="Proteomes" id="UP000002311">
    <property type="component" value="Chromosome VII"/>
</dbReference>
<dbReference type="RNAct" id="P16451">
    <property type="molecule type" value="protein"/>
</dbReference>
<dbReference type="GO" id="GO:0005759">
    <property type="term" value="C:mitochondrial matrix"/>
    <property type="evidence" value="ECO:0007669"/>
    <property type="project" value="UniProtKB-SubCell"/>
</dbReference>
<dbReference type="GO" id="GO:0005739">
    <property type="term" value="C:mitochondrion"/>
    <property type="evidence" value="ECO:0000314"/>
    <property type="project" value="ComplexPortal"/>
</dbReference>
<dbReference type="GO" id="GO:0045254">
    <property type="term" value="C:pyruvate dehydrogenase complex"/>
    <property type="evidence" value="ECO:0000314"/>
    <property type="project" value="SGD"/>
</dbReference>
<dbReference type="GO" id="GO:0004742">
    <property type="term" value="F:dihydrolipoyllysine-residue acetyltransferase activity"/>
    <property type="evidence" value="ECO:0000318"/>
    <property type="project" value="GO_Central"/>
</dbReference>
<dbReference type="GO" id="GO:0005198">
    <property type="term" value="F:structural molecule activity"/>
    <property type="evidence" value="ECO:0000314"/>
    <property type="project" value="SGD"/>
</dbReference>
<dbReference type="GO" id="GO:0006086">
    <property type="term" value="P:pyruvate decarboxylation to acetyl-CoA"/>
    <property type="evidence" value="ECO:0000314"/>
    <property type="project" value="SGD"/>
</dbReference>
<dbReference type="CDD" id="cd06849">
    <property type="entry name" value="lipoyl_domain"/>
    <property type="match status" value="1"/>
</dbReference>
<dbReference type="FunFam" id="2.40.50.100:FF:000010">
    <property type="entry name" value="Acetyltransferase component of pyruvate dehydrogenase complex"/>
    <property type="match status" value="1"/>
</dbReference>
<dbReference type="FunFam" id="4.10.320.10:FF:000017">
    <property type="entry name" value="Pyruvate dehydrogenase complex protein X component, mitochondrial"/>
    <property type="match status" value="1"/>
</dbReference>
<dbReference type="Gene3D" id="2.40.50.100">
    <property type="match status" value="1"/>
</dbReference>
<dbReference type="Gene3D" id="4.10.320.10">
    <property type="entry name" value="E3-binding domain"/>
    <property type="match status" value="1"/>
</dbReference>
<dbReference type="InterPro" id="IPR003016">
    <property type="entry name" value="2-oxoA_DH_lipoyl-BS"/>
</dbReference>
<dbReference type="InterPro" id="IPR000089">
    <property type="entry name" value="Biotin_lipoyl"/>
</dbReference>
<dbReference type="InterPro" id="IPR045257">
    <property type="entry name" value="E2/Pdx1"/>
</dbReference>
<dbReference type="InterPro" id="IPR036625">
    <property type="entry name" value="E3-bd_dom_sf"/>
</dbReference>
<dbReference type="InterPro" id="IPR004167">
    <property type="entry name" value="PSBD"/>
</dbReference>
<dbReference type="InterPro" id="IPR011053">
    <property type="entry name" value="Single_hybrid_motif"/>
</dbReference>
<dbReference type="PANTHER" id="PTHR23151">
    <property type="entry name" value="DIHYDROLIPOAMIDE ACETYL/SUCCINYL-TRANSFERASE-RELATED"/>
    <property type="match status" value="1"/>
</dbReference>
<dbReference type="PANTHER" id="PTHR23151:SF82">
    <property type="entry name" value="PYRUVATE DEHYDROGENASE COMPLEX PROTEIN X COMPONENT, MITOCHONDRIAL"/>
    <property type="match status" value="1"/>
</dbReference>
<dbReference type="Pfam" id="PF00364">
    <property type="entry name" value="Biotin_lipoyl"/>
    <property type="match status" value="1"/>
</dbReference>
<dbReference type="SUPFAM" id="SSF47005">
    <property type="entry name" value="Peripheral subunit-binding domain of 2-oxo acid dehydrogenase complex"/>
    <property type="match status" value="1"/>
</dbReference>
<dbReference type="SUPFAM" id="SSF51230">
    <property type="entry name" value="Single hybrid motif"/>
    <property type="match status" value="1"/>
</dbReference>
<dbReference type="PROSITE" id="PS50968">
    <property type="entry name" value="BIOTINYL_LIPOYL"/>
    <property type="match status" value="1"/>
</dbReference>
<dbReference type="PROSITE" id="PS00189">
    <property type="entry name" value="LIPOYL"/>
    <property type="match status" value="1"/>
</dbReference>
<dbReference type="PROSITE" id="PS51826">
    <property type="entry name" value="PSBD"/>
    <property type="match status" value="1"/>
</dbReference>
<evidence type="ECO:0000250" key="1"/>
<evidence type="ECO:0000255" key="2">
    <source>
        <dbReference type="PROSITE-ProRule" id="PRU01066"/>
    </source>
</evidence>
<evidence type="ECO:0000255" key="3">
    <source>
        <dbReference type="PROSITE-ProRule" id="PRU01170"/>
    </source>
</evidence>
<evidence type="ECO:0000269" key="4">
    <source>
    </source>
</evidence>
<evidence type="ECO:0000269" key="5">
    <source>
    </source>
</evidence>
<evidence type="ECO:0000305" key="6"/>
<gene>
    <name type="primary">PDX1</name>
    <name type="ordered locus">YGR193C</name>
    <name type="ORF">G7579</name>
</gene>
<name>ODPX_YEAST</name>
<protein>
    <recommendedName>
        <fullName>Pyruvate dehydrogenase complex protein X component, mitochondrial</fullName>
    </recommendedName>
    <alternativeName>
        <fullName>Dihydrolipoamide dehydrogenase-binding protein of pyruvate dehydrogenase complex</fullName>
    </alternativeName>
    <alternativeName>
        <fullName>E3-binding protein</fullName>
    </alternativeName>
    <alternativeName>
        <fullName>Pyruvate dehydrogenase complex component E3BP</fullName>
    </alternativeName>
</protein>
<reference key="1">
    <citation type="journal article" date="1989" name="Proc. Natl. Acad. Sci. U.S.A.">
        <title>Cloning and nucleotide sequence of the gene for protein X from Saccharomyces cerevisiae.</title>
        <authorList>
            <person name="Behal R.H."/>
            <person name="Browning K.S."/>
            <person name="Hall T.B."/>
            <person name="Reed L.J."/>
        </authorList>
    </citation>
    <scope>NUCLEOTIDE SEQUENCE [GENOMIC DNA]</scope>
    <scope>PROTEIN SEQUENCE OF 31-60 AND 192-206</scope>
</reference>
<reference key="2">
    <citation type="journal article" date="1995" name="Yeast">
        <title>The complete sequence of a 9037 bp DNA fragment of the right arm of Saccharomyces cerevisiae chromosome VII.</title>
        <authorList>
            <person name="Arroyo J."/>
            <person name="Garcia-Gonzalez M."/>
            <person name="Garcia-Saez M.I."/>
            <person name="Sanchez M."/>
            <person name="Nombela C."/>
        </authorList>
    </citation>
    <scope>NUCLEOTIDE SEQUENCE [GENOMIC DNA]</scope>
    <source>
        <strain>ATCC 204508 / S288c</strain>
    </source>
</reference>
<reference key="3">
    <citation type="journal article" date="1997" name="Nature">
        <title>The nucleotide sequence of Saccharomyces cerevisiae chromosome VII.</title>
        <authorList>
            <person name="Tettelin H."/>
            <person name="Agostoni-Carbone M.L."/>
            <person name="Albermann K."/>
            <person name="Albers M."/>
            <person name="Arroyo J."/>
            <person name="Backes U."/>
            <person name="Barreiros T."/>
            <person name="Bertani I."/>
            <person name="Bjourson A.J."/>
            <person name="Brueckner M."/>
            <person name="Bruschi C.V."/>
            <person name="Carignani G."/>
            <person name="Castagnoli L."/>
            <person name="Cerdan E."/>
            <person name="Clemente M.L."/>
            <person name="Coblenz A."/>
            <person name="Coglievina M."/>
            <person name="Coissac E."/>
            <person name="Defoor E."/>
            <person name="Del Bino S."/>
            <person name="Delius H."/>
            <person name="Delneri D."/>
            <person name="de Wergifosse P."/>
            <person name="Dujon B."/>
            <person name="Durand P."/>
            <person name="Entian K.-D."/>
            <person name="Eraso P."/>
            <person name="Escribano V."/>
            <person name="Fabiani L."/>
            <person name="Fartmann B."/>
            <person name="Feroli F."/>
            <person name="Feuermann M."/>
            <person name="Frontali L."/>
            <person name="Garcia-Gonzalez M."/>
            <person name="Garcia-Saez M.I."/>
            <person name="Goffeau A."/>
            <person name="Guerreiro P."/>
            <person name="Hani J."/>
            <person name="Hansen M."/>
            <person name="Hebling U."/>
            <person name="Hernandez K."/>
            <person name="Heumann K."/>
            <person name="Hilger F."/>
            <person name="Hofmann B."/>
            <person name="Indge K.J."/>
            <person name="James C.M."/>
            <person name="Klima R."/>
            <person name="Koetter P."/>
            <person name="Kramer B."/>
            <person name="Kramer W."/>
            <person name="Lauquin G."/>
            <person name="Leuther H."/>
            <person name="Louis E.J."/>
            <person name="Maillier E."/>
            <person name="Marconi A."/>
            <person name="Martegani E."/>
            <person name="Mazon M.J."/>
            <person name="Mazzoni C."/>
            <person name="McReynolds A.D.K."/>
            <person name="Melchioretto P."/>
            <person name="Mewes H.-W."/>
            <person name="Minenkova O."/>
            <person name="Mueller-Auer S."/>
            <person name="Nawrocki A."/>
            <person name="Netter P."/>
            <person name="Neu R."/>
            <person name="Nombela C."/>
            <person name="Oliver S.G."/>
            <person name="Panzeri L."/>
            <person name="Paoluzi S."/>
            <person name="Plevani P."/>
            <person name="Portetelle D."/>
            <person name="Portillo F."/>
            <person name="Potier S."/>
            <person name="Purnelle B."/>
            <person name="Rieger M."/>
            <person name="Riles L."/>
            <person name="Rinaldi T."/>
            <person name="Robben J."/>
            <person name="Rodrigues-Pousada C."/>
            <person name="Rodriguez-Belmonte E."/>
            <person name="Rodriguez-Torres A.M."/>
            <person name="Rose M."/>
            <person name="Ruzzi M."/>
            <person name="Saliola M."/>
            <person name="Sanchez-Perez M."/>
            <person name="Schaefer B."/>
            <person name="Schaefer M."/>
            <person name="Scharfe M."/>
            <person name="Schmidheini T."/>
            <person name="Schreer A."/>
            <person name="Skala J."/>
            <person name="Souciet J.-L."/>
            <person name="Steensma H.Y."/>
            <person name="Talla E."/>
            <person name="Thierry A."/>
            <person name="Vandenbol M."/>
            <person name="van der Aart Q.J.M."/>
            <person name="Van Dyck L."/>
            <person name="Vanoni M."/>
            <person name="Verhasselt P."/>
            <person name="Voet M."/>
            <person name="Volckaert G."/>
            <person name="Wambutt R."/>
            <person name="Watson M.D."/>
            <person name="Weber N."/>
            <person name="Wedler E."/>
            <person name="Wedler H."/>
            <person name="Wipfli P."/>
            <person name="Wolf K."/>
            <person name="Wright L.F."/>
            <person name="Zaccaria P."/>
            <person name="Zimmermann M."/>
            <person name="Zollner A."/>
            <person name="Kleine K."/>
        </authorList>
    </citation>
    <scope>NUCLEOTIDE SEQUENCE [LARGE SCALE GENOMIC DNA]</scope>
    <source>
        <strain>ATCC 204508 / S288c</strain>
    </source>
</reference>
<reference key="4">
    <citation type="journal article" date="2014" name="G3 (Bethesda)">
        <title>The reference genome sequence of Saccharomyces cerevisiae: Then and now.</title>
        <authorList>
            <person name="Engel S.R."/>
            <person name="Dietrich F.S."/>
            <person name="Fisk D.G."/>
            <person name="Binkley G."/>
            <person name="Balakrishnan R."/>
            <person name="Costanzo M.C."/>
            <person name="Dwight S.S."/>
            <person name="Hitz B.C."/>
            <person name="Karra K."/>
            <person name="Nash R.S."/>
            <person name="Weng S."/>
            <person name="Wong E.D."/>
            <person name="Lloyd P."/>
            <person name="Skrzypek M.S."/>
            <person name="Miyasato S.R."/>
            <person name="Simison M."/>
            <person name="Cherry J.M."/>
        </authorList>
    </citation>
    <scope>GENOME REANNOTATION</scope>
    <source>
        <strain>ATCC 204508 / S288c</strain>
    </source>
</reference>
<reference key="5">
    <citation type="journal article" date="2007" name="Genome Res.">
        <title>Approaching a complete repository of sequence-verified protein-encoding clones for Saccharomyces cerevisiae.</title>
        <authorList>
            <person name="Hu Y."/>
            <person name="Rolfs A."/>
            <person name="Bhullar B."/>
            <person name="Murthy T.V.S."/>
            <person name="Zhu C."/>
            <person name="Berger M.F."/>
            <person name="Camargo A.A."/>
            <person name="Kelley F."/>
            <person name="McCarron S."/>
            <person name="Jepson D."/>
            <person name="Richardson A."/>
            <person name="Raphael J."/>
            <person name="Moreira D."/>
            <person name="Taycher E."/>
            <person name="Zuo D."/>
            <person name="Mohr S."/>
            <person name="Kane M.F."/>
            <person name="Williamson J."/>
            <person name="Simpson A.J.G."/>
            <person name="Bulyk M.L."/>
            <person name="Harlow E."/>
            <person name="Marsischky G."/>
            <person name="Kolodner R.D."/>
            <person name="LaBaer J."/>
        </authorList>
    </citation>
    <scope>NUCLEOTIDE SEQUENCE [GENOMIC DNA]</scope>
    <source>
        <strain>ATCC 204508 / S288c</strain>
    </source>
</reference>
<reference key="6">
    <citation type="journal article" date="1991" name="Biochemistry">
        <title>Disruption and mutagenesis of the Saccharomyces cerevisiae PDX1 gene encoding the protein X component of the pyruvate dehydrogenase complex.</title>
        <authorList>
            <person name="Lawson J.E."/>
            <person name="Behal R.H."/>
            <person name="Reed L.J."/>
        </authorList>
    </citation>
    <scope>MUTAGENESIS</scope>
</reference>
<reference key="7">
    <citation type="journal article" date="2003" name="Nature">
        <title>Global analysis of protein expression in yeast.</title>
        <authorList>
            <person name="Ghaemmaghami S."/>
            <person name="Huh W.-K."/>
            <person name="Bower K."/>
            <person name="Howson R.W."/>
            <person name="Belle A."/>
            <person name="Dephoure N."/>
            <person name="O'Shea E.K."/>
            <person name="Weissman J.S."/>
        </authorList>
    </citation>
    <scope>LEVEL OF PROTEIN EXPRESSION [LARGE SCALE ANALYSIS]</scope>
</reference>
<organism>
    <name type="scientific">Saccharomyces cerevisiae (strain ATCC 204508 / S288c)</name>
    <name type="common">Baker's yeast</name>
    <dbReference type="NCBI Taxonomy" id="559292"/>
    <lineage>
        <taxon>Eukaryota</taxon>
        <taxon>Fungi</taxon>
        <taxon>Dikarya</taxon>
        <taxon>Ascomycota</taxon>
        <taxon>Saccharomycotina</taxon>
        <taxon>Saccharomycetes</taxon>
        <taxon>Saccharomycetales</taxon>
        <taxon>Saccharomycetaceae</taxon>
        <taxon>Saccharomyces</taxon>
    </lineage>
</organism>
<keyword id="KW-0903">Direct protein sequencing</keyword>
<keyword id="KW-0450">Lipoyl</keyword>
<keyword id="KW-0496">Mitochondrion</keyword>
<keyword id="KW-1185">Reference proteome</keyword>
<keyword id="KW-0809">Transit peptide</keyword>
<sequence>MLSAISKVSTLKSCTRYLTKCNYHASAKLLAVKTFSMPAMSPTMEKGGIVSWKYKVGEPFSAGDVILEVETDKSQIDVEALDDGKLAKILKDEGSKDVDVGEPIAYIADVDDDLATIKLPQEANTANAKSIEIKKPSADSTEATQQHLKKATVTPIKTVDGSQANLEQTLLPSVSLLLAENNISKQKALKEIAPSGSNGRLLKGDVLAYLGKIPQDSVNKVTEFIKKNERLDLSNIKPIQLKPKIAEQAQTKAADKPKITPVEFEEQLVFHAPASIPFDKLSESLNSFMKEAYQFSHGTPLMDTNSKYFDPIFEDLVTLSPREPRFKFSYDLMQIPKANNMQDTYGQEDIFDLLTGSDATASSVRPVEKNLPEKNEYILALNVSVNNKKFNDAEAKAKRFLDYVRELESF</sequence>
<comment type="function">
    <text>Required for anchoring dihydrolipoamide dehydrogenase (E3) to the dihydrolipoamide transacetylase (E2) core of the pyruvate dehydrogenase complexes of eukaryotes. This specific binding is essential for a functional PDH complex.</text>
</comment>
<comment type="subunit">
    <text>Eukaryotic pyruvate dehydrogenase (PDH) complexes are organized as a core consisting of the oligomeric dihydrolipoamide acetyl-transferase (E2), around which are arranged multiple copies of pyruvate dehydrogenase (E1), dihydrolipoamide dehydrogenase (E3) and protein X (E3BP) bound by non-covalent bonds.</text>
</comment>
<comment type="subcellular location">
    <subcellularLocation>
        <location>Mitochondrion matrix</location>
    </subcellularLocation>
</comment>
<comment type="miscellaneous">
    <text evidence="4">Present with 414 molecules/cell in log phase SD medium.</text>
</comment>
<comment type="similarity">
    <text evidence="6">Belongs to the 2-oxoacid dehydrogenase family.</text>
</comment>
<accession>P16451</accession>
<accession>D6VUX5</accession>
<accession>E9P906</accession>
<feature type="transit peptide" description="Mitochondrion" evidence="5">
    <location>
        <begin position="1"/>
        <end position="30"/>
    </location>
</feature>
<feature type="chain" id="PRO_0000020487" description="Pyruvate dehydrogenase complex protein X component, mitochondrial">
    <location>
        <begin position="31"/>
        <end position="410"/>
    </location>
</feature>
<feature type="domain" description="Lipoyl-binding" evidence="2">
    <location>
        <begin position="32"/>
        <end position="108"/>
    </location>
</feature>
<feature type="domain" description="Peripheral subunit-binding (PSBD)" evidence="3">
    <location>
        <begin position="169"/>
        <end position="210"/>
    </location>
</feature>
<feature type="modified residue" description="N6-lipoyllysine" evidence="1 2">
    <location>
        <position position="73"/>
    </location>
</feature>
<feature type="sequence conflict" description="In Ref. 5; AAT93002." evidence="6" ref="5">
    <original>I</original>
    <variation>M</variation>
    <location>
        <position position="378"/>
    </location>
</feature>
<proteinExistence type="evidence at protein level"/>